<organism>
    <name type="scientific">Bradyrhizobium diazoefficiens (strain JCM 10833 / BCRC 13528 / IAM 13628 / NBRC 14792 / USDA 110)</name>
    <dbReference type="NCBI Taxonomy" id="224911"/>
    <lineage>
        <taxon>Bacteria</taxon>
        <taxon>Pseudomonadati</taxon>
        <taxon>Pseudomonadota</taxon>
        <taxon>Alphaproteobacteria</taxon>
        <taxon>Hyphomicrobiales</taxon>
        <taxon>Nitrobacteraceae</taxon>
        <taxon>Bradyrhizobium</taxon>
    </lineage>
</organism>
<evidence type="ECO:0000255" key="1"/>
<evidence type="ECO:0000255" key="2">
    <source>
        <dbReference type="PROSITE-ProRule" id="PRU00280"/>
    </source>
</evidence>
<evidence type="ECO:0000305" key="3"/>
<name>FIXI_BRADU</name>
<dbReference type="EC" id="7.2.2.-"/>
<dbReference type="EMBL" id="X95634">
    <property type="protein sequence ID" value="CAA64889.1"/>
    <property type="molecule type" value="Genomic_DNA"/>
</dbReference>
<dbReference type="EMBL" id="AJ005001">
    <property type="protein sequence ID" value="CAA06285.1"/>
    <property type="molecule type" value="Genomic_DNA"/>
</dbReference>
<dbReference type="EMBL" id="BA000040">
    <property type="protein sequence ID" value="BAC48034.1"/>
    <property type="molecule type" value="Genomic_DNA"/>
</dbReference>
<dbReference type="RefSeq" id="NP_769409.1">
    <property type="nucleotide sequence ID" value="NC_004463.1"/>
</dbReference>
<dbReference type="RefSeq" id="WP_011085554.1">
    <property type="nucleotide sequence ID" value="NC_004463.1"/>
</dbReference>
<dbReference type="SMR" id="Q59207"/>
<dbReference type="STRING" id="224911.AAV28_10870"/>
<dbReference type="EnsemblBacteria" id="BAC48034">
    <property type="protein sequence ID" value="BAC48034"/>
    <property type="gene ID" value="BAC48034"/>
</dbReference>
<dbReference type="GeneID" id="46489815"/>
<dbReference type="KEGG" id="bja:blr2769"/>
<dbReference type="PATRIC" id="fig|224911.44.peg.2390"/>
<dbReference type="eggNOG" id="COG2217">
    <property type="taxonomic scope" value="Bacteria"/>
</dbReference>
<dbReference type="HOGENOM" id="CLU_001771_0_3_5"/>
<dbReference type="InParanoid" id="Q59207"/>
<dbReference type="OrthoDB" id="391538at2"/>
<dbReference type="PhylomeDB" id="Q59207"/>
<dbReference type="Proteomes" id="UP000002526">
    <property type="component" value="Chromosome"/>
</dbReference>
<dbReference type="GO" id="GO:0005886">
    <property type="term" value="C:plasma membrane"/>
    <property type="evidence" value="ECO:0000318"/>
    <property type="project" value="GO_Central"/>
</dbReference>
<dbReference type="GO" id="GO:0005524">
    <property type="term" value="F:ATP binding"/>
    <property type="evidence" value="ECO:0007669"/>
    <property type="project" value="UniProtKB-KW"/>
</dbReference>
<dbReference type="GO" id="GO:0016887">
    <property type="term" value="F:ATP hydrolysis activity"/>
    <property type="evidence" value="ECO:0007669"/>
    <property type="project" value="InterPro"/>
</dbReference>
<dbReference type="GO" id="GO:0019829">
    <property type="term" value="F:ATPase-coupled monoatomic cation transmembrane transporter activity"/>
    <property type="evidence" value="ECO:0007669"/>
    <property type="project" value="InterPro"/>
</dbReference>
<dbReference type="GO" id="GO:0005507">
    <property type="term" value="F:copper ion binding"/>
    <property type="evidence" value="ECO:0000318"/>
    <property type="project" value="GO_Central"/>
</dbReference>
<dbReference type="GO" id="GO:0015662">
    <property type="term" value="F:P-type ion transporter activity"/>
    <property type="evidence" value="ECO:0007669"/>
    <property type="project" value="UniProtKB-ARBA"/>
</dbReference>
<dbReference type="GO" id="GO:0010273">
    <property type="term" value="P:detoxification of copper ion"/>
    <property type="evidence" value="ECO:0000318"/>
    <property type="project" value="GO_Central"/>
</dbReference>
<dbReference type="GO" id="GO:0009399">
    <property type="term" value="P:nitrogen fixation"/>
    <property type="evidence" value="ECO:0007669"/>
    <property type="project" value="UniProtKB-KW"/>
</dbReference>
<dbReference type="GO" id="GO:0055085">
    <property type="term" value="P:transmembrane transport"/>
    <property type="evidence" value="ECO:0000318"/>
    <property type="project" value="GO_Central"/>
</dbReference>
<dbReference type="CDD" id="cd00371">
    <property type="entry name" value="HMA"/>
    <property type="match status" value="1"/>
</dbReference>
<dbReference type="CDD" id="cd02092">
    <property type="entry name" value="P-type_ATPase_FixI-like"/>
    <property type="match status" value="1"/>
</dbReference>
<dbReference type="Gene3D" id="3.30.70.100">
    <property type="match status" value="1"/>
</dbReference>
<dbReference type="Gene3D" id="3.40.1110.10">
    <property type="entry name" value="Calcium-transporting ATPase, cytoplasmic domain N"/>
    <property type="match status" value="1"/>
</dbReference>
<dbReference type="Gene3D" id="2.70.150.10">
    <property type="entry name" value="Calcium-transporting ATPase, cytoplasmic transduction domain A"/>
    <property type="match status" value="1"/>
</dbReference>
<dbReference type="Gene3D" id="3.40.50.1000">
    <property type="entry name" value="HAD superfamily/HAD-like"/>
    <property type="match status" value="1"/>
</dbReference>
<dbReference type="InterPro" id="IPR023299">
    <property type="entry name" value="ATPase_P-typ_cyto_dom_N"/>
</dbReference>
<dbReference type="InterPro" id="IPR018303">
    <property type="entry name" value="ATPase_P-typ_P_site"/>
</dbReference>
<dbReference type="InterPro" id="IPR023298">
    <property type="entry name" value="ATPase_P-typ_TM_dom_sf"/>
</dbReference>
<dbReference type="InterPro" id="IPR008250">
    <property type="entry name" value="ATPase_P-typ_transduc_dom_A_sf"/>
</dbReference>
<dbReference type="InterPro" id="IPR036412">
    <property type="entry name" value="HAD-like_sf"/>
</dbReference>
<dbReference type="InterPro" id="IPR023214">
    <property type="entry name" value="HAD_sf"/>
</dbReference>
<dbReference type="InterPro" id="IPR017969">
    <property type="entry name" value="Heavy-metal-associated_CS"/>
</dbReference>
<dbReference type="InterPro" id="IPR006121">
    <property type="entry name" value="HMA_dom"/>
</dbReference>
<dbReference type="InterPro" id="IPR036163">
    <property type="entry name" value="HMA_dom_sf"/>
</dbReference>
<dbReference type="InterPro" id="IPR027256">
    <property type="entry name" value="P-typ_ATPase_IB"/>
</dbReference>
<dbReference type="InterPro" id="IPR001757">
    <property type="entry name" value="P_typ_ATPase"/>
</dbReference>
<dbReference type="NCBIfam" id="TIGR01511">
    <property type="entry name" value="ATPase-IB1_Cu"/>
    <property type="match status" value="1"/>
</dbReference>
<dbReference type="NCBIfam" id="TIGR01525">
    <property type="entry name" value="ATPase-IB_hvy"/>
    <property type="match status" value="1"/>
</dbReference>
<dbReference type="NCBIfam" id="TIGR01494">
    <property type="entry name" value="ATPase_P-type"/>
    <property type="match status" value="1"/>
</dbReference>
<dbReference type="PANTHER" id="PTHR46594">
    <property type="entry name" value="P-TYPE CATION-TRANSPORTING ATPASE"/>
    <property type="match status" value="1"/>
</dbReference>
<dbReference type="PANTHER" id="PTHR46594:SF4">
    <property type="entry name" value="P-TYPE CATION-TRANSPORTING ATPASE"/>
    <property type="match status" value="1"/>
</dbReference>
<dbReference type="Pfam" id="PF00122">
    <property type="entry name" value="E1-E2_ATPase"/>
    <property type="match status" value="1"/>
</dbReference>
<dbReference type="Pfam" id="PF00403">
    <property type="entry name" value="HMA"/>
    <property type="match status" value="1"/>
</dbReference>
<dbReference type="Pfam" id="PF00702">
    <property type="entry name" value="Hydrolase"/>
    <property type="match status" value="1"/>
</dbReference>
<dbReference type="PRINTS" id="PR00119">
    <property type="entry name" value="CATATPASE"/>
</dbReference>
<dbReference type="SUPFAM" id="SSF81653">
    <property type="entry name" value="Calcium ATPase, transduction domain A"/>
    <property type="match status" value="1"/>
</dbReference>
<dbReference type="SUPFAM" id="SSF81665">
    <property type="entry name" value="Calcium ATPase, transmembrane domain M"/>
    <property type="match status" value="1"/>
</dbReference>
<dbReference type="SUPFAM" id="SSF56784">
    <property type="entry name" value="HAD-like"/>
    <property type="match status" value="1"/>
</dbReference>
<dbReference type="SUPFAM" id="SSF55008">
    <property type="entry name" value="HMA, heavy metal-associated domain"/>
    <property type="match status" value="1"/>
</dbReference>
<dbReference type="SUPFAM" id="SSF81660">
    <property type="entry name" value="Metal cation-transporting ATPase, ATP-binding domain N"/>
    <property type="match status" value="1"/>
</dbReference>
<dbReference type="PROSITE" id="PS00154">
    <property type="entry name" value="ATPASE_E1_E2"/>
    <property type="match status" value="1"/>
</dbReference>
<dbReference type="PROSITE" id="PS01047">
    <property type="entry name" value="HMA_1"/>
    <property type="match status" value="1"/>
</dbReference>
<dbReference type="PROSITE" id="PS50846">
    <property type="entry name" value="HMA_2"/>
    <property type="match status" value="1"/>
</dbReference>
<feature type="chain" id="PRO_0000046154" description="Nitrogen fixation protein FixI">
    <location>
        <begin position="1"/>
        <end position="730"/>
    </location>
</feature>
<feature type="topological domain" description="Cytoplasmic" evidence="1">
    <location>
        <begin position="1"/>
        <end position="101"/>
    </location>
</feature>
<feature type="transmembrane region" description="Helical" evidence="1">
    <location>
        <begin position="102"/>
        <end position="123"/>
    </location>
</feature>
<feature type="topological domain" description="Extracellular" evidence="1">
    <location>
        <begin position="124"/>
        <end position="138"/>
    </location>
</feature>
<feature type="transmembrane region" description="Helical" evidence="1">
    <location>
        <begin position="139"/>
        <end position="162"/>
    </location>
</feature>
<feature type="topological domain" description="Cytoplasmic" evidence="1">
    <location>
        <begin position="163"/>
        <end position="168"/>
    </location>
</feature>
<feature type="transmembrane region" description="Helical" evidence="1">
    <location>
        <begin position="169"/>
        <end position="190"/>
    </location>
</feature>
<feature type="topological domain" description="Extracellular" evidence="1">
    <location>
        <begin position="191"/>
        <end position="202"/>
    </location>
</feature>
<feature type="transmembrane region" description="Helical" evidence="1">
    <location>
        <begin position="203"/>
        <end position="223"/>
    </location>
</feature>
<feature type="topological domain" description="Cytoplasmic" evidence="1">
    <location>
        <begin position="224"/>
        <end position="352"/>
    </location>
</feature>
<feature type="transmembrane region" description="Helical" evidence="1">
    <location>
        <begin position="353"/>
        <end position="375"/>
    </location>
</feature>
<feature type="topological domain" description="Extracellular" evidence="1">
    <location>
        <begin position="376"/>
        <end position="382"/>
    </location>
</feature>
<feature type="transmembrane region" description="Helical" evidence="1">
    <location>
        <begin position="383"/>
        <end position="400"/>
    </location>
</feature>
<feature type="topological domain" description="Cytoplasmic" evidence="1">
    <location>
        <begin position="401"/>
        <end position="676"/>
    </location>
</feature>
<feature type="transmembrane region" description="Helical" evidence="1">
    <location>
        <begin position="677"/>
        <end position="696"/>
    </location>
</feature>
<feature type="topological domain" description="Extracellular" evidence="1">
    <location>
        <begin position="697"/>
        <end position="701"/>
    </location>
</feature>
<feature type="transmembrane region" description="Helical" evidence="1">
    <location>
        <begin position="702"/>
        <end position="720"/>
    </location>
</feature>
<feature type="topological domain" description="Cytoplasmic" evidence="1">
    <location>
        <begin position="721"/>
        <end position="730"/>
    </location>
</feature>
<feature type="domain" description="HMA" evidence="2">
    <location>
        <begin position="19"/>
        <end position="85"/>
    </location>
</feature>
<feature type="active site" description="4-aspartylphosphate intermediate" evidence="3">
    <location>
        <position position="438"/>
    </location>
</feature>
<feature type="binding site" evidence="2">
    <location>
        <position position="30"/>
    </location>
    <ligand>
        <name>a metal cation</name>
        <dbReference type="ChEBI" id="CHEBI:25213"/>
    </ligand>
</feature>
<feature type="binding site" evidence="2">
    <location>
        <position position="33"/>
    </location>
    <ligand>
        <name>a metal cation</name>
        <dbReference type="ChEBI" id="CHEBI:25213"/>
    </ligand>
</feature>
<feature type="binding site">
    <location>
        <position position="622"/>
    </location>
    <ligand>
        <name>Mg(2+)</name>
        <dbReference type="ChEBI" id="CHEBI:18420"/>
    </ligand>
</feature>
<feature type="binding site">
    <location>
        <position position="626"/>
    </location>
    <ligand>
        <name>Mg(2+)</name>
        <dbReference type="ChEBI" id="CHEBI:18420"/>
    </ligand>
</feature>
<keyword id="KW-0067">ATP-binding</keyword>
<keyword id="KW-1003">Cell membrane</keyword>
<keyword id="KW-0460">Magnesium</keyword>
<keyword id="KW-0472">Membrane</keyword>
<keyword id="KW-0479">Metal-binding</keyword>
<keyword id="KW-0535">Nitrogen fixation</keyword>
<keyword id="KW-0547">Nucleotide-binding</keyword>
<keyword id="KW-0597">Phosphoprotein</keyword>
<keyword id="KW-1185">Reference proteome</keyword>
<keyword id="KW-1278">Translocase</keyword>
<keyword id="KW-0812">Transmembrane</keyword>
<keyword id="KW-1133">Transmembrane helix</keyword>
<protein>
    <recommendedName>
        <fullName>Nitrogen fixation protein FixI</fullName>
    </recommendedName>
    <alternativeName>
        <fullName>E1-E2 type cation ATPase FixI</fullName>
        <ecNumber>7.2.2.-</ecNumber>
    </alternativeName>
</protein>
<accession>Q59207</accession>
<sequence length="730" mass="77339">MHVTRDFSHYVRTAGEGIKHIDLAVEGVHCAGCMAKIERGLSAIPDVTLARVNLTDRRVALEWKAGTLDPGRFIDRLEELGYKAYPFETESAEVAEVAESRFLLRCLGVAAFATMNVMMLSIPVWSGNVSDMLPEQRDFFHWLSALIALPAAAYAGQPFFRSAWRALSAKTTNMDVPISIGVILALGMSVVETIHHAEHAYFDAAIMLLTFLLVGRFLDQNMRRRTRAVAGNLAALKAETAAKFVGPDEISQVPVAAISPGDIVLLRPGERCAVDGTVIEGRSEIDQSLITGETLYVTAEQGTPVYAGSMNISGTLRVRVSAASEATLLAEIARLLDNALQARSRYMRLADRASRLYAPVVHATALITILGWVIAGASWHDAIVTGVAVLIITCPCALGLAIPTVQTVASGAMFKSGVLLNSGDAIERLAEADHVIFDKTGTLTLPDLEVMNAADIPADIFELAGRLALSSHHPVAAAVAQAAGARSPIVGAVEEAGQGVRADVDGAEIRLGRPSFCGAEALVGDGTRLDPEASIVAFSKGAEKFILWVRQGLRPDAQAVIAALKARNIGIEILSGDREPAVKAAAHALAIPEWRAGVTPADKIARIEELKRRGARVLMVGDGMNDAPSLAAAHVSMSPISAAHLSQATADLVFLGRPLAPVAAAIDSARKALHLMRQNLWLAIGYNVLAVPVAISGVVTPLIAAAAMSGSSILVMLNSLRARSDSREIV</sequence>
<gene>
    <name type="primary">fixI</name>
    <name type="ordered locus">blr2769</name>
</gene>
<reference key="1">
    <citation type="journal article" date="1996" name="Arch. Microbiol.">
        <title>The Bradyrhizobium japonicum fixGHIS genes are required for the formation of the high-affinity cbb3-type cytochrome oxidase.</title>
        <authorList>
            <person name="Preisig O."/>
            <person name="Zufferey R."/>
            <person name="Hennecke H."/>
        </authorList>
    </citation>
    <scope>NUCLEOTIDE SEQUENCE [GENOMIC DNA]</scope>
    <source>
        <strain>USDA 110spc4</strain>
    </source>
</reference>
<reference key="2">
    <citation type="journal article" date="2002" name="DNA Res.">
        <title>Complete genomic sequence of nitrogen-fixing symbiotic bacterium Bradyrhizobium japonicum USDA110.</title>
        <authorList>
            <person name="Kaneko T."/>
            <person name="Nakamura Y."/>
            <person name="Sato S."/>
            <person name="Minamisawa K."/>
            <person name="Uchiumi T."/>
            <person name="Sasamoto S."/>
            <person name="Watanabe A."/>
            <person name="Idesawa K."/>
            <person name="Iriguchi M."/>
            <person name="Kawashima K."/>
            <person name="Kohara M."/>
            <person name="Matsumoto M."/>
            <person name="Shimpo S."/>
            <person name="Tsuruoka H."/>
            <person name="Wada T."/>
            <person name="Yamada M."/>
            <person name="Tabata S."/>
        </authorList>
    </citation>
    <scope>NUCLEOTIDE SEQUENCE [LARGE SCALE GENOMIC DNA]</scope>
    <source>
        <strain>JCM 10833 / BCRC 13528 / IAM 13628 / NBRC 14792 / USDA 110</strain>
    </source>
</reference>
<proteinExistence type="inferred from homology"/>
<comment type="function">
    <text>FixI is a pump of a specific cation involved in symbiotic nitrogen fixation. The four proteins FixG, FixH, FixI, and FixS may participate in a membrane-bound complex coupling the FixI cation pump with a redox process catalyzed by FixG.</text>
</comment>
<comment type="catalytic activity">
    <reaction>
        <text>ATP + H2O = ADP + phosphate + H(+)</text>
        <dbReference type="Rhea" id="RHEA:13065"/>
        <dbReference type="ChEBI" id="CHEBI:15377"/>
        <dbReference type="ChEBI" id="CHEBI:15378"/>
        <dbReference type="ChEBI" id="CHEBI:30616"/>
        <dbReference type="ChEBI" id="CHEBI:43474"/>
        <dbReference type="ChEBI" id="CHEBI:456216"/>
    </reaction>
</comment>
<comment type="subcellular location">
    <subcellularLocation>
        <location>Cell membrane</location>
        <topology>Multi-pass membrane protein</topology>
    </subcellularLocation>
</comment>
<comment type="similarity">
    <text evidence="3">Belongs to the cation transport ATPase (P-type) (TC 3.A.3) family. Type IB subfamily.</text>
</comment>